<keyword id="KW-0012">Acyltransferase</keyword>
<keyword id="KW-0028">Amino-acid biosynthesis</keyword>
<keyword id="KW-0963">Cytoplasm</keyword>
<keyword id="KW-0220">Diaminopimelate biosynthesis</keyword>
<keyword id="KW-0457">Lysine biosynthesis</keyword>
<keyword id="KW-0677">Repeat</keyword>
<keyword id="KW-0808">Transferase</keyword>
<dbReference type="EC" id="2.3.1.117" evidence="1"/>
<dbReference type="EMBL" id="CP001635">
    <property type="protein sequence ID" value="ACS19341.1"/>
    <property type="molecule type" value="Genomic_DNA"/>
</dbReference>
<dbReference type="SMR" id="C5CLT4"/>
<dbReference type="STRING" id="543728.Vapar_2719"/>
<dbReference type="KEGG" id="vap:Vapar_2719"/>
<dbReference type="eggNOG" id="COG2171">
    <property type="taxonomic scope" value="Bacteria"/>
</dbReference>
<dbReference type="HOGENOM" id="CLU_050859_0_1_4"/>
<dbReference type="OrthoDB" id="9775362at2"/>
<dbReference type="UniPathway" id="UPA00034">
    <property type="reaction ID" value="UER00019"/>
</dbReference>
<dbReference type="GO" id="GO:0005737">
    <property type="term" value="C:cytoplasm"/>
    <property type="evidence" value="ECO:0007669"/>
    <property type="project" value="UniProtKB-SubCell"/>
</dbReference>
<dbReference type="GO" id="GO:0008666">
    <property type="term" value="F:2,3,4,5-tetrahydropyridine-2,6-dicarboxylate N-succinyltransferase activity"/>
    <property type="evidence" value="ECO:0007669"/>
    <property type="project" value="UniProtKB-UniRule"/>
</dbReference>
<dbReference type="GO" id="GO:0019877">
    <property type="term" value="P:diaminopimelate biosynthetic process"/>
    <property type="evidence" value="ECO:0007669"/>
    <property type="project" value="UniProtKB-UniRule"/>
</dbReference>
<dbReference type="GO" id="GO:0009089">
    <property type="term" value="P:lysine biosynthetic process via diaminopimelate"/>
    <property type="evidence" value="ECO:0007669"/>
    <property type="project" value="UniProtKB-UniRule"/>
</dbReference>
<dbReference type="CDD" id="cd03350">
    <property type="entry name" value="LbH_THP_succinylT"/>
    <property type="match status" value="1"/>
</dbReference>
<dbReference type="Gene3D" id="2.160.10.10">
    <property type="entry name" value="Hexapeptide repeat proteins"/>
    <property type="match status" value="1"/>
</dbReference>
<dbReference type="Gene3D" id="1.10.166.10">
    <property type="entry name" value="Tetrahydrodipicolinate-N-succinyltransferase, N-terminal domain"/>
    <property type="match status" value="1"/>
</dbReference>
<dbReference type="HAMAP" id="MF_00811">
    <property type="entry name" value="DapD"/>
    <property type="match status" value="1"/>
</dbReference>
<dbReference type="InterPro" id="IPR005664">
    <property type="entry name" value="DapD_Trfase_Hexpep_rpt_fam"/>
</dbReference>
<dbReference type="InterPro" id="IPR001451">
    <property type="entry name" value="Hexapep"/>
</dbReference>
<dbReference type="InterPro" id="IPR018357">
    <property type="entry name" value="Hexapep_transf_CS"/>
</dbReference>
<dbReference type="InterPro" id="IPR023180">
    <property type="entry name" value="THP_succinylTrfase_dom1"/>
</dbReference>
<dbReference type="InterPro" id="IPR037133">
    <property type="entry name" value="THP_succinylTrfase_N_sf"/>
</dbReference>
<dbReference type="InterPro" id="IPR050179">
    <property type="entry name" value="Trans_hexapeptide_repeat"/>
</dbReference>
<dbReference type="InterPro" id="IPR011004">
    <property type="entry name" value="Trimer_LpxA-like_sf"/>
</dbReference>
<dbReference type="NCBIfam" id="TIGR00965">
    <property type="entry name" value="dapD"/>
    <property type="match status" value="1"/>
</dbReference>
<dbReference type="NCBIfam" id="NF008808">
    <property type="entry name" value="PRK11830.1"/>
    <property type="match status" value="1"/>
</dbReference>
<dbReference type="PANTHER" id="PTHR43300:SF10">
    <property type="entry name" value="2,3,4,5-TETRAHYDROPYRIDINE-2,6-DICARBOXYLATE N-ACETYLTRANSFERASE"/>
    <property type="match status" value="1"/>
</dbReference>
<dbReference type="PANTHER" id="PTHR43300">
    <property type="entry name" value="ACETYLTRANSFERASE"/>
    <property type="match status" value="1"/>
</dbReference>
<dbReference type="Pfam" id="PF14602">
    <property type="entry name" value="Hexapep_2"/>
    <property type="match status" value="1"/>
</dbReference>
<dbReference type="Pfam" id="PF14805">
    <property type="entry name" value="THDPS_N_2"/>
    <property type="match status" value="1"/>
</dbReference>
<dbReference type="SUPFAM" id="SSF51161">
    <property type="entry name" value="Trimeric LpxA-like enzymes"/>
    <property type="match status" value="1"/>
</dbReference>
<dbReference type="PROSITE" id="PS00101">
    <property type="entry name" value="HEXAPEP_TRANSFERASES"/>
    <property type="match status" value="1"/>
</dbReference>
<protein>
    <recommendedName>
        <fullName evidence="1">2,3,4,5-tetrahydropyridine-2,6-dicarboxylate N-succinyltransferase</fullName>
        <ecNumber evidence="1">2.3.1.117</ecNumber>
    </recommendedName>
    <alternativeName>
        <fullName evidence="1">Tetrahydrodipicolinate N-succinyltransferase</fullName>
        <shortName evidence="1">THDP succinyltransferase</shortName>
        <shortName evidence="1">THP succinyltransferase</shortName>
        <shortName evidence="1">Tetrahydropicolinate succinylase</shortName>
    </alternativeName>
</protein>
<name>DAPD_VARPS</name>
<organism>
    <name type="scientific">Variovorax paradoxus (strain S110)</name>
    <dbReference type="NCBI Taxonomy" id="543728"/>
    <lineage>
        <taxon>Bacteria</taxon>
        <taxon>Pseudomonadati</taxon>
        <taxon>Pseudomonadota</taxon>
        <taxon>Betaproteobacteria</taxon>
        <taxon>Burkholderiales</taxon>
        <taxon>Comamonadaceae</taxon>
        <taxon>Variovorax</taxon>
    </lineage>
</organism>
<evidence type="ECO:0000255" key="1">
    <source>
        <dbReference type="HAMAP-Rule" id="MF_00811"/>
    </source>
</evidence>
<feature type="chain" id="PRO_1000213021" description="2,3,4,5-tetrahydropyridine-2,6-dicarboxylate N-succinyltransferase">
    <location>
        <begin position="1"/>
        <end position="277"/>
    </location>
</feature>
<feature type="binding site" evidence="1">
    <location>
        <position position="106"/>
    </location>
    <ligand>
        <name>substrate</name>
    </ligand>
</feature>
<feature type="binding site" evidence="1">
    <location>
        <position position="143"/>
    </location>
    <ligand>
        <name>substrate</name>
    </ligand>
</feature>
<gene>
    <name evidence="1" type="primary">dapD</name>
    <name type="ordered locus">Vapar_2719</name>
</gene>
<proteinExistence type="inferred from homology"/>
<sequence>MTQQLQQIIDAAWEDRANISSSAAPAEVRDAVEHVISELNNGKLRVATRESVGQWTVHQWIKKAVLLSFRLKDNEQMQAGSLGFYDKVPTKFSHLSANELKESGVRIVPPAVARRGSYIAKGAILMPSYVNIGAYVGEGTMVDTWATVGSCAQIGANVHLSGGVGIGGVLEPLQAGPTIIEDNCFIGARSEVVEGVVIEENSVLGMGVYIGQSTPIFNRDTGETSFGRVPSGSVVISGNLPKKTKSGQEYSTYAAIIVKTVDAQTRSKTSLNDLLRD</sequence>
<reference key="1">
    <citation type="journal article" date="2011" name="J. Bacteriol.">
        <title>Complete genome sequence of the metabolically versatile plant growth-promoting endophyte, Variovorax paradoxus S110.</title>
        <authorList>
            <person name="Han J.I."/>
            <person name="Choi H.K."/>
            <person name="Lee S.W."/>
            <person name="Orwin P.M."/>
            <person name="Kim J."/>
            <person name="Laroe S.L."/>
            <person name="Kim T.G."/>
            <person name="O'Neil J."/>
            <person name="Leadbetter J.R."/>
            <person name="Lee S.Y."/>
            <person name="Hur C.G."/>
            <person name="Spain J.C."/>
            <person name="Ovchinnikova G."/>
            <person name="Goodwin L."/>
            <person name="Han C."/>
        </authorList>
    </citation>
    <scope>NUCLEOTIDE SEQUENCE [LARGE SCALE GENOMIC DNA]</scope>
    <source>
        <strain>S110</strain>
    </source>
</reference>
<comment type="catalytic activity">
    <reaction evidence="1">
        <text>(S)-2,3,4,5-tetrahydrodipicolinate + succinyl-CoA + H2O = (S)-2-succinylamino-6-oxoheptanedioate + CoA</text>
        <dbReference type="Rhea" id="RHEA:17325"/>
        <dbReference type="ChEBI" id="CHEBI:15377"/>
        <dbReference type="ChEBI" id="CHEBI:15685"/>
        <dbReference type="ChEBI" id="CHEBI:16845"/>
        <dbReference type="ChEBI" id="CHEBI:57287"/>
        <dbReference type="ChEBI" id="CHEBI:57292"/>
        <dbReference type="EC" id="2.3.1.117"/>
    </reaction>
</comment>
<comment type="pathway">
    <text evidence="1">Amino-acid biosynthesis; L-lysine biosynthesis via DAP pathway; LL-2,6-diaminopimelate from (S)-tetrahydrodipicolinate (succinylase route): step 1/3.</text>
</comment>
<comment type="subunit">
    <text evidence="1">Homotrimer.</text>
</comment>
<comment type="subcellular location">
    <subcellularLocation>
        <location evidence="1">Cytoplasm</location>
    </subcellularLocation>
</comment>
<comment type="similarity">
    <text evidence="1">Belongs to the transferase hexapeptide repeat family.</text>
</comment>
<accession>C5CLT4</accession>